<organism>
    <name type="scientific">Saguinus oedipus</name>
    <name type="common">Cotton-top tamarin</name>
    <dbReference type="NCBI Taxonomy" id="9490"/>
    <lineage>
        <taxon>Eukaryota</taxon>
        <taxon>Metazoa</taxon>
        <taxon>Chordata</taxon>
        <taxon>Craniata</taxon>
        <taxon>Vertebrata</taxon>
        <taxon>Euteleostomi</taxon>
        <taxon>Mammalia</taxon>
        <taxon>Eutheria</taxon>
        <taxon>Euarchontoglires</taxon>
        <taxon>Primates</taxon>
        <taxon>Haplorrhini</taxon>
        <taxon>Platyrrhini</taxon>
        <taxon>Cebidae</taxon>
        <taxon>Callitrichinae</taxon>
        <taxon>Saguinus</taxon>
    </lineage>
</organism>
<name>1C01_SAGOE</name>
<dbReference type="EMBL" id="M33477">
    <property type="protein sequence ID" value="AAA36953.1"/>
    <property type="molecule type" value="mRNA"/>
</dbReference>
<dbReference type="PIR" id="I72218">
    <property type="entry name" value="I72218"/>
</dbReference>
<dbReference type="SMR" id="P30517"/>
<dbReference type="GO" id="GO:0031901">
    <property type="term" value="C:early endosome membrane"/>
    <property type="evidence" value="ECO:0007669"/>
    <property type="project" value="UniProtKB-ARBA"/>
</dbReference>
<dbReference type="GO" id="GO:0012507">
    <property type="term" value="C:ER to Golgi transport vesicle membrane"/>
    <property type="evidence" value="ECO:0007669"/>
    <property type="project" value="UniProtKB-ARBA"/>
</dbReference>
<dbReference type="GO" id="GO:0009897">
    <property type="term" value="C:external side of plasma membrane"/>
    <property type="evidence" value="ECO:0007669"/>
    <property type="project" value="TreeGrafter"/>
</dbReference>
<dbReference type="GO" id="GO:0005615">
    <property type="term" value="C:extracellular space"/>
    <property type="evidence" value="ECO:0007669"/>
    <property type="project" value="TreeGrafter"/>
</dbReference>
<dbReference type="GO" id="GO:0098553">
    <property type="term" value="C:lumenal side of endoplasmic reticulum membrane"/>
    <property type="evidence" value="ECO:0007669"/>
    <property type="project" value="UniProtKB-ARBA"/>
</dbReference>
<dbReference type="GO" id="GO:0042612">
    <property type="term" value="C:MHC class I protein complex"/>
    <property type="evidence" value="ECO:0007669"/>
    <property type="project" value="UniProtKB-KW"/>
</dbReference>
<dbReference type="GO" id="GO:0030670">
    <property type="term" value="C:phagocytic vesicle membrane"/>
    <property type="evidence" value="ECO:0007669"/>
    <property type="project" value="UniProtKB-ARBA"/>
</dbReference>
<dbReference type="GO" id="GO:0055038">
    <property type="term" value="C:recycling endosome membrane"/>
    <property type="evidence" value="ECO:0007669"/>
    <property type="project" value="UniProtKB-ARBA"/>
</dbReference>
<dbReference type="GO" id="GO:0042605">
    <property type="term" value="F:peptide antigen binding"/>
    <property type="evidence" value="ECO:0007669"/>
    <property type="project" value="TreeGrafter"/>
</dbReference>
<dbReference type="GO" id="GO:0005102">
    <property type="term" value="F:signaling receptor binding"/>
    <property type="evidence" value="ECO:0007669"/>
    <property type="project" value="TreeGrafter"/>
</dbReference>
<dbReference type="GO" id="GO:0002486">
    <property type="term" value="P:antigen processing and presentation of endogenous peptide antigen via MHC class I via ER pathway, TAP-independent"/>
    <property type="evidence" value="ECO:0007669"/>
    <property type="project" value="TreeGrafter"/>
</dbReference>
<dbReference type="GO" id="GO:0002476">
    <property type="term" value="P:antigen processing and presentation of endogenous peptide antigen via MHC class Ib"/>
    <property type="evidence" value="ECO:0007669"/>
    <property type="project" value="TreeGrafter"/>
</dbReference>
<dbReference type="GO" id="GO:0006955">
    <property type="term" value="P:immune response"/>
    <property type="evidence" value="ECO:0007669"/>
    <property type="project" value="InterPro"/>
</dbReference>
<dbReference type="GO" id="GO:0001916">
    <property type="term" value="P:positive regulation of T cell mediated cytotoxicity"/>
    <property type="evidence" value="ECO:0007669"/>
    <property type="project" value="TreeGrafter"/>
</dbReference>
<dbReference type="FunFam" id="2.60.40.10:FF:000014">
    <property type="entry name" value="H-2 class I histocompatibility antigen, alpha chain"/>
    <property type="match status" value="1"/>
</dbReference>
<dbReference type="FunFam" id="3.30.500.10:FF:000001">
    <property type="entry name" value="H-2 class I histocompatibility antigen, alpha chain"/>
    <property type="match status" value="1"/>
</dbReference>
<dbReference type="Gene3D" id="2.60.40.10">
    <property type="entry name" value="Immunoglobulins"/>
    <property type="match status" value="1"/>
</dbReference>
<dbReference type="Gene3D" id="3.30.500.10">
    <property type="entry name" value="MHC class I-like antigen recognition-like"/>
    <property type="match status" value="1"/>
</dbReference>
<dbReference type="InterPro" id="IPR007110">
    <property type="entry name" value="Ig-like_dom"/>
</dbReference>
<dbReference type="InterPro" id="IPR036179">
    <property type="entry name" value="Ig-like_dom_sf"/>
</dbReference>
<dbReference type="InterPro" id="IPR013783">
    <property type="entry name" value="Ig-like_fold"/>
</dbReference>
<dbReference type="InterPro" id="IPR003006">
    <property type="entry name" value="Ig/MHC_CS"/>
</dbReference>
<dbReference type="InterPro" id="IPR003597">
    <property type="entry name" value="Ig_C1-set"/>
</dbReference>
<dbReference type="InterPro" id="IPR050208">
    <property type="entry name" value="MHC_class-I_related"/>
</dbReference>
<dbReference type="InterPro" id="IPR011161">
    <property type="entry name" value="MHC_I-like_Ag-recog"/>
</dbReference>
<dbReference type="InterPro" id="IPR037055">
    <property type="entry name" value="MHC_I-like_Ag-recog_sf"/>
</dbReference>
<dbReference type="InterPro" id="IPR011162">
    <property type="entry name" value="MHC_I/II-like_Ag-recog"/>
</dbReference>
<dbReference type="InterPro" id="IPR001039">
    <property type="entry name" value="MHC_I_a_a1/a2"/>
</dbReference>
<dbReference type="InterPro" id="IPR010579">
    <property type="entry name" value="MHC_I_a_C"/>
</dbReference>
<dbReference type="PANTHER" id="PTHR16675:SF169">
    <property type="entry name" value="HLA CLASS I HISTOCOMPATIBILITY ANTIGEN, ALPHA CHAIN G"/>
    <property type="match status" value="1"/>
</dbReference>
<dbReference type="PANTHER" id="PTHR16675">
    <property type="entry name" value="MHC CLASS I-RELATED"/>
    <property type="match status" value="1"/>
</dbReference>
<dbReference type="Pfam" id="PF07654">
    <property type="entry name" value="C1-set"/>
    <property type="match status" value="1"/>
</dbReference>
<dbReference type="Pfam" id="PF00129">
    <property type="entry name" value="MHC_I"/>
    <property type="match status" value="1"/>
</dbReference>
<dbReference type="Pfam" id="PF06623">
    <property type="entry name" value="MHC_I_C"/>
    <property type="match status" value="1"/>
</dbReference>
<dbReference type="PRINTS" id="PR01638">
    <property type="entry name" value="MHCCLASSI"/>
</dbReference>
<dbReference type="SMART" id="SM00407">
    <property type="entry name" value="IGc1"/>
    <property type="match status" value="1"/>
</dbReference>
<dbReference type="SUPFAM" id="SSF48726">
    <property type="entry name" value="Immunoglobulin"/>
    <property type="match status" value="1"/>
</dbReference>
<dbReference type="SUPFAM" id="SSF54452">
    <property type="entry name" value="MHC antigen-recognition domain"/>
    <property type="match status" value="1"/>
</dbReference>
<dbReference type="PROSITE" id="PS50835">
    <property type="entry name" value="IG_LIKE"/>
    <property type="match status" value="1"/>
</dbReference>
<dbReference type="PROSITE" id="PS00290">
    <property type="entry name" value="IG_MHC"/>
    <property type="match status" value="1"/>
</dbReference>
<feature type="signal peptide" evidence="1">
    <location>
        <begin position="1"/>
        <end position="24"/>
    </location>
</feature>
<feature type="chain" id="PRO_0000018922" description="Saoe class I histocompatibility antigen, C alpha chain">
    <location>
        <begin position="25"/>
        <end position="365"/>
    </location>
</feature>
<feature type="topological domain" description="Extracellular" evidence="3">
    <location>
        <begin position="25"/>
        <end position="308"/>
    </location>
</feature>
<feature type="transmembrane region" description="Helical" evidence="3">
    <location>
        <begin position="309"/>
        <end position="332"/>
    </location>
</feature>
<feature type="topological domain" description="Cytoplasmic" evidence="3">
    <location>
        <begin position="333"/>
        <end position="365"/>
    </location>
</feature>
<feature type="domain" description="Ig-like C1-type">
    <location>
        <begin position="209"/>
        <end position="297"/>
    </location>
</feature>
<feature type="region of interest" description="Alpha-1">
    <location>
        <begin position="25"/>
        <end position="114"/>
    </location>
</feature>
<feature type="region of interest" description="Alpha-2">
    <location>
        <begin position="115"/>
        <end position="206"/>
    </location>
</feature>
<feature type="region of interest" description="Alpha-3">
    <location>
        <begin position="207"/>
        <end position="298"/>
    </location>
</feature>
<feature type="region of interest" description="Connecting peptide">
    <location>
        <begin position="299"/>
        <end position="308"/>
    </location>
</feature>
<feature type="region of interest" description="Disordered" evidence="5">
    <location>
        <begin position="337"/>
        <end position="365"/>
    </location>
</feature>
<feature type="compositionally biased region" description="Polar residues" evidence="5">
    <location>
        <begin position="346"/>
        <end position="359"/>
    </location>
</feature>
<feature type="modified residue" description="Phosphoserine" evidence="2">
    <location>
        <position position="356"/>
    </location>
</feature>
<feature type="modified residue" description="Phosphoserine" evidence="2">
    <location>
        <position position="359"/>
    </location>
</feature>
<feature type="glycosylation site" description="N-linked (GlcNAc...) asparagine" evidence="1">
    <location>
        <position position="110"/>
    </location>
</feature>
<feature type="disulfide bond" evidence="4">
    <location>
        <begin position="125"/>
        <end position="188"/>
    </location>
</feature>
<feature type="disulfide bond" evidence="4">
    <location>
        <begin position="227"/>
        <end position="283"/>
    </location>
</feature>
<protein>
    <recommendedName>
        <fullName>Saoe class I histocompatibility antigen, C alpha chain</fullName>
    </recommendedName>
    <alternativeName>
        <fullName>Class I histocompatibility antigen, C alpha chain</fullName>
    </alternativeName>
</protein>
<comment type="function">
    <text>Involved in the presentation of foreign antigens to the immune system.</text>
</comment>
<comment type="subunit">
    <text>Heterodimer of an alpha chain and a beta chain (beta-2-microglobulin).</text>
</comment>
<comment type="subcellular location">
    <subcellularLocation>
        <location>Membrane</location>
        <topology>Single-pass type I membrane protein</topology>
    </subcellularLocation>
</comment>
<comment type="similarity">
    <text evidence="6">Belongs to the MHC class I family.</text>
</comment>
<reference key="1">
    <citation type="journal article" date="1990" name="J. Immunol.">
        <title>Molecular cloning of cDNA that encode MHC class I molecules from a New World primate (Saguinus oedipus). Natural selection acts at positions that may affect peptide presentation to T cells.</title>
        <authorList>
            <person name="Watkins D.I."/>
            <person name="Letvin N.L."/>
            <person name="Hughes A.L."/>
            <person name="Tedder T.F."/>
        </authorList>
    </citation>
    <scope>NUCLEOTIDE SEQUENCE [MRNA]</scope>
</reference>
<accession>P30517</accession>
<keyword id="KW-1015">Disulfide bond</keyword>
<keyword id="KW-0325">Glycoprotein</keyword>
<keyword id="KW-0391">Immunity</keyword>
<keyword id="KW-0472">Membrane</keyword>
<keyword id="KW-0490">MHC I</keyword>
<keyword id="KW-0597">Phosphoprotein</keyword>
<keyword id="KW-0732">Signal</keyword>
<keyword id="KW-0812">Transmembrane</keyword>
<keyword id="KW-1133">Transmembrane helix</keyword>
<sequence>MTIMAPRTLLLLLSGALSVTETWAGSHSMRYFSTTVSRPGRGEPRYIEVGYVDDTQFVRFDSDAASPRMEPRAPWVEQEGPEYWVLQTRNSKASAQTFRVNLQTLLGYYNQSEAGFHTIQWMYGCDLGPDGRLLRGYHQYAYDGKDYIALNEDLRSWTAADAAAQITQRKWAEANAAEGMRAYLEGTCVEWLRRHLENGKEMLQRAEPPKTHVTHHPVSDHEATLRCWALGFYPAEITLTWQRDGEDQAQDMELVETRPTGNGTFQKWAAVVVLSGEEHKYTCHVQHEGLPEPFTLRWEPPSQPTIPIMGIVAILAILGAVVTGAVVAAVMWRKKSSDKKGGSYSQAARSDSAQGSDVSLTACKV</sequence>
<evidence type="ECO:0000250" key="1"/>
<evidence type="ECO:0000250" key="2">
    <source>
        <dbReference type="UniProtKB" id="P01900"/>
    </source>
</evidence>
<evidence type="ECO:0000255" key="3"/>
<evidence type="ECO:0000255" key="4">
    <source>
        <dbReference type="PROSITE-ProRule" id="PRU00114"/>
    </source>
</evidence>
<evidence type="ECO:0000256" key="5">
    <source>
        <dbReference type="SAM" id="MobiDB-lite"/>
    </source>
</evidence>
<evidence type="ECO:0000305" key="6"/>
<proteinExistence type="evidence at transcript level"/>